<gene>
    <name evidence="1" type="primary">dapB</name>
    <name type="ordered locus">ABC1916</name>
</gene>
<keyword id="KW-0028">Amino-acid biosynthesis</keyword>
<keyword id="KW-0963">Cytoplasm</keyword>
<keyword id="KW-0220">Diaminopimelate biosynthesis</keyword>
<keyword id="KW-0457">Lysine biosynthesis</keyword>
<keyword id="KW-0520">NAD</keyword>
<keyword id="KW-0521">NADP</keyword>
<keyword id="KW-0560">Oxidoreductase</keyword>
<keyword id="KW-1185">Reference proteome</keyword>
<accession>Q5WGQ4</accession>
<comment type="function">
    <text evidence="1">Catalyzes the conversion of 4-hydroxy-tetrahydrodipicolinate (HTPA) to tetrahydrodipicolinate.</text>
</comment>
<comment type="catalytic activity">
    <reaction evidence="1">
        <text>(S)-2,3,4,5-tetrahydrodipicolinate + NAD(+) + H2O = (2S,4S)-4-hydroxy-2,3,4,5-tetrahydrodipicolinate + NADH + H(+)</text>
        <dbReference type="Rhea" id="RHEA:35323"/>
        <dbReference type="ChEBI" id="CHEBI:15377"/>
        <dbReference type="ChEBI" id="CHEBI:15378"/>
        <dbReference type="ChEBI" id="CHEBI:16845"/>
        <dbReference type="ChEBI" id="CHEBI:57540"/>
        <dbReference type="ChEBI" id="CHEBI:57945"/>
        <dbReference type="ChEBI" id="CHEBI:67139"/>
        <dbReference type="EC" id="1.17.1.8"/>
    </reaction>
</comment>
<comment type="catalytic activity">
    <reaction evidence="1">
        <text>(S)-2,3,4,5-tetrahydrodipicolinate + NADP(+) + H2O = (2S,4S)-4-hydroxy-2,3,4,5-tetrahydrodipicolinate + NADPH + H(+)</text>
        <dbReference type="Rhea" id="RHEA:35331"/>
        <dbReference type="ChEBI" id="CHEBI:15377"/>
        <dbReference type="ChEBI" id="CHEBI:15378"/>
        <dbReference type="ChEBI" id="CHEBI:16845"/>
        <dbReference type="ChEBI" id="CHEBI:57783"/>
        <dbReference type="ChEBI" id="CHEBI:58349"/>
        <dbReference type="ChEBI" id="CHEBI:67139"/>
        <dbReference type="EC" id="1.17.1.8"/>
    </reaction>
</comment>
<comment type="pathway">
    <text evidence="1">Amino-acid biosynthesis; L-lysine biosynthesis via DAP pathway; (S)-tetrahydrodipicolinate from L-aspartate: step 4/4.</text>
</comment>
<comment type="subcellular location">
    <subcellularLocation>
        <location evidence="1">Cytoplasm</location>
    </subcellularLocation>
</comment>
<comment type="similarity">
    <text evidence="1">Belongs to the DapB family.</text>
</comment>
<comment type="caution">
    <text evidence="2">Was originally thought to be a dihydrodipicolinate reductase (DHDPR), catalyzing the conversion of dihydrodipicolinate to tetrahydrodipicolinate. However, it was shown in E.coli that the substrate of the enzymatic reaction is not dihydrodipicolinate (DHDP) but in fact (2S,4S)-4-hydroxy-2,3,4,5-tetrahydrodipicolinic acid (HTPA), the product released by the DapA-catalyzed reaction.</text>
</comment>
<sequence length="264" mass="29013">MTRIVIAGPRGNMGQEAVKLCLREESFELVAVVDSKNDGKQLKGLQEFQQGDVPVYTDMARCFAEHEPDVLIDLTAPAFGRKHMEVAFEHGVRPVVGTTGFSDEDIRDLTKLAEAKELGAIIAPNFAIGAILMMKFAQTAARYMNDVEIIEQHHDRKLDAPSGTAVKTAQLIAEVRAPKKQGHEQEREEMAGARGADFDGMKIHSVRLPGRVAHQEVLFGGVGQTLSIRHDSLNRESFMPGVKLAVEQVVKLSTLVYGLENLID</sequence>
<proteinExistence type="inferred from homology"/>
<organism>
    <name type="scientific">Shouchella clausii (strain KSM-K16)</name>
    <name type="common">Alkalihalobacillus clausii</name>
    <dbReference type="NCBI Taxonomy" id="66692"/>
    <lineage>
        <taxon>Bacteria</taxon>
        <taxon>Bacillati</taxon>
        <taxon>Bacillota</taxon>
        <taxon>Bacilli</taxon>
        <taxon>Bacillales</taxon>
        <taxon>Bacillaceae</taxon>
        <taxon>Shouchella</taxon>
    </lineage>
</organism>
<protein>
    <recommendedName>
        <fullName evidence="1">4-hydroxy-tetrahydrodipicolinate reductase</fullName>
        <shortName evidence="1">HTPA reductase</shortName>
        <ecNumber evidence="1">1.17.1.8</ecNumber>
    </recommendedName>
</protein>
<name>DAPB_SHOC1</name>
<feature type="chain" id="PRO_0000228323" description="4-hydroxy-tetrahydrodipicolinate reductase">
    <location>
        <begin position="1"/>
        <end position="264"/>
    </location>
</feature>
<feature type="active site" description="Proton donor/acceptor" evidence="1">
    <location>
        <position position="153"/>
    </location>
</feature>
<feature type="active site" description="Proton donor" evidence="1">
    <location>
        <position position="157"/>
    </location>
</feature>
<feature type="binding site" evidence="1">
    <location>
        <begin position="8"/>
        <end position="13"/>
    </location>
    <ligand>
        <name>NAD(+)</name>
        <dbReference type="ChEBI" id="CHEBI:57540"/>
    </ligand>
</feature>
<feature type="binding site" evidence="1">
    <location>
        <position position="36"/>
    </location>
    <ligand>
        <name>NADP(+)</name>
        <dbReference type="ChEBI" id="CHEBI:58349"/>
    </ligand>
</feature>
<feature type="binding site" evidence="1">
    <location>
        <begin position="97"/>
        <end position="99"/>
    </location>
    <ligand>
        <name>NAD(+)</name>
        <dbReference type="ChEBI" id="CHEBI:57540"/>
    </ligand>
</feature>
<feature type="binding site" evidence="1">
    <location>
        <begin position="123"/>
        <end position="126"/>
    </location>
    <ligand>
        <name>NAD(+)</name>
        <dbReference type="ChEBI" id="CHEBI:57540"/>
    </ligand>
</feature>
<feature type="binding site" evidence="1">
    <location>
        <position position="154"/>
    </location>
    <ligand>
        <name>(S)-2,3,4,5-tetrahydrodipicolinate</name>
        <dbReference type="ChEBI" id="CHEBI:16845"/>
    </ligand>
</feature>
<feature type="binding site" evidence="1">
    <location>
        <begin position="163"/>
        <end position="164"/>
    </location>
    <ligand>
        <name>(S)-2,3,4,5-tetrahydrodipicolinate</name>
        <dbReference type="ChEBI" id="CHEBI:16845"/>
    </ligand>
</feature>
<evidence type="ECO:0000255" key="1">
    <source>
        <dbReference type="HAMAP-Rule" id="MF_00102"/>
    </source>
</evidence>
<evidence type="ECO:0000305" key="2"/>
<reference key="1">
    <citation type="submission" date="2003-10" db="EMBL/GenBank/DDBJ databases">
        <title>The complete genome sequence of the alkaliphilic Bacillus clausii KSM-K16.</title>
        <authorList>
            <person name="Takaki Y."/>
            <person name="Kageyama Y."/>
            <person name="Shimamura S."/>
            <person name="Suzuki H."/>
            <person name="Nishi S."/>
            <person name="Hatada Y."/>
            <person name="Kawai S."/>
            <person name="Ito S."/>
            <person name="Horikoshi K."/>
        </authorList>
    </citation>
    <scope>NUCLEOTIDE SEQUENCE [LARGE SCALE GENOMIC DNA]</scope>
    <source>
        <strain>KSM-K16</strain>
    </source>
</reference>
<dbReference type="EC" id="1.17.1.8" evidence="1"/>
<dbReference type="EMBL" id="AP006627">
    <property type="protein sequence ID" value="BAD64451.1"/>
    <property type="molecule type" value="Genomic_DNA"/>
</dbReference>
<dbReference type="RefSeq" id="WP_011246759.1">
    <property type="nucleotide sequence ID" value="NC_006582.1"/>
</dbReference>
<dbReference type="SMR" id="Q5WGQ4"/>
<dbReference type="STRING" id="66692.ABC1916"/>
<dbReference type="KEGG" id="bcl:ABC1916"/>
<dbReference type="eggNOG" id="COG0289">
    <property type="taxonomic scope" value="Bacteria"/>
</dbReference>
<dbReference type="HOGENOM" id="CLU_047479_0_1_9"/>
<dbReference type="OrthoDB" id="9790352at2"/>
<dbReference type="UniPathway" id="UPA00034">
    <property type="reaction ID" value="UER00018"/>
</dbReference>
<dbReference type="Proteomes" id="UP000001168">
    <property type="component" value="Chromosome"/>
</dbReference>
<dbReference type="GO" id="GO:0005829">
    <property type="term" value="C:cytosol"/>
    <property type="evidence" value="ECO:0007669"/>
    <property type="project" value="TreeGrafter"/>
</dbReference>
<dbReference type="GO" id="GO:0008839">
    <property type="term" value="F:4-hydroxy-tetrahydrodipicolinate reductase"/>
    <property type="evidence" value="ECO:0007669"/>
    <property type="project" value="UniProtKB-EC"/>
</dbReference>
<dbReference type="GO" id="GO:0051287">
    <property type="term" value="F:NAD binding"/>
    <property type="evidence" value="ECO:0007669"/>
    <property type="project" value="UniProtKB-UniRule"/>
</dbReference>
<dbReference type="GO" id="GO:0050661">
    <property type="term" value="F:NADP binding"/>
    <property type="evidence" value="ECO:0007669"/>
    <property type="project" value="UniProtKB-UniRule"/>
</dbReference>
<dbReference type="GO" id="GO:0016726">
    <property type="term" value="F:oxidoreductase activity, acting on CH or CH2 groups, NAD or NADP as acceptor"/>
    <property type="evidence" value="ECO:0007669"/>
    <property type="project" value="UniProtKB-UniRule"/>
</dbReference>
<dbReference type="GO" id="GO:0019877">
    <property type="term" value="P:diaminopimelate biosynthetic process"/>
    <property type="evidence" value="ECO:0007669"/>
    <property type="project" value="UniProtKB-UniRule"/>
</dbReference>
<dbReference type="GO" id="GO:0009089">
    <property type="term" value="P:lysine biosynthetic process via diaminopimelate"/>
    <property type="evidence" value="ECO:0007669"/>
    <property type="project" value="UniProtKB-UniRule"/>
</dbReference>
<dbReference type="CDD" id="cd02274">
    <property type="entry name" value="DHDPR_N"/>
    <property type="match status" value="1"/>
</dbReference>
<dbReference type="FunFam" id="3.30.360.10:FF:000009">
    <property type="entry name" value="4-hydroxy-tetrahydrodipicolinate reductase"/>
    <property type="match status" value="1"/>
</dbReference>
<dbReference type="Gene3D" id="3.30.360.10">
    <property type="entry name" value="Dihydrodipicolinate Reductase, domain 2"/>
    <property type="match status" value="1"/>
</dbReference>
<dbReference type="Gene3D" id="3.40.50.720">
    <property type="entry name" value="NAD(P)-binding Rossmann-like Domain"/>
    <property type="match status" value="1"/>
</dbReference>
<dbReference type="HAMAP" id="MF_00102">
    <property type="entry name" value="DapB"/>
    <property type="match status" value="1"/>
</dbReference>
<dbReference type="InterPro" id="IPR022663">
    <property type="entry name" value="DapB_C"/>
</dbReference>
<dbReference type="InterPro" id="IPR000846">
    <property type="entry name" value="DapB_N"/>
</dbReference>
<dbReference type="InterPro" id="IPR022664">
    <property type="entry name" value="DapB_N_CS"/>
</dbReference>
<dbReference type="InterPro" id="IPR023940">
    <property type="entry name" value="DHDPR_bac"/>
</dbReference>
<dbReference type="InterPro" id="IPR036291">
    <property type="entry name" value="NAD(P)-bd_dom_sf"/>
</dbReference>
<dbReference type="NCBIfam" id="TIGR00036">
    <property type="entry name" value="dapB"/>
    <property type="match status" value="1"/>
</dbReference>
<dbReference type="PANTHER" id="PTHR20836:SF0">
    <property type="entry name" value="4-HYDROXY-TETRAHYDRODIPICOLINATE REDUCTASE 1, CHLOROPLASTIC-RELATED"/>
    <property type="match status" value="1"/>
</dbReference>
<dbReference type="PANTHER" id="PTHR20836">
    <property type="entry name" value="DIHYDRODIPICOLINATE REDUCTASE"/>
    <property type="match status" value="1"/>
</dbReference>
<dbReference type="Pfam" id="PF05173">
    <property type="entry name" value="DapB_C"/>
    <property type="match status" value="1"/>
</dbReference>
<dbReference type="Pfam" id="PF01113">
    <property type="entry name" value="DapB_N"/>
    <property type="match status" value="1"/>
</dbReference>
<dbReference type="PIRSF" id="PIRSF000161">
    <property type="entry name" value="DHPR"/>
    <property type="match status" value="1"/>
</dbReference>
<dbReference type="SUPFAM" id="SSF55347">
    <property type="entry name" value="Glyceraldehyde-3-phosphate dehydrogenase-like, C-terminal domain"/>
    <property type="match status" value="1"/>
</dbReference>
<dbReference type="SUPFAM" id="SSF51735">
    <property type="entry name" value="NAD(P)-binding Rossmann-fold domains"/>
    <property type="match status" value="1"/>
</dbReference>
<dbReference type="PROSITE" id="PS01298">
    <property type="entry name" value="DAPB"/>
    <property type="match status" value="1"/>
</dbReference>